<organism>
    <name type="scientific">Thermus thermophilus (strain ATCC 27634 / DSM 579 / HB8)</name>
    <dbReference type="NCBI Taxonomy" id="300852"/>
    <lineage>
        <taxon>Bacteria</taxon>
        <taxon>Thermotogati</taxon>
        <taxon>Deinococcota</taxon>
        <taxon>Deinococci</taxon>
        <taxon>Thermales</taxon>
        <taxon>Thermaceae</taxon>
        <taxon>Thermus</taxon>
    </lineage>
</organism>
<proteinExistence type="inferred from homology"/>
<reference key="1">
    <citation type="submission" date="2004-11" db="EMBL/GenBank/DDBJ databases">
        <title>Complete genome sequence of Thermus thermophilus HB8.</title>
        <authorList>
            <person name="Masui R."/>
            <person name="Kurokawa K."/>
            <person name="Nakagawa N."/>
            <person name="Tokunaga F."/>
            <person name="Koyama Y."/>
            <person name="Shibata T."/>
            <person name="Oshima T."/>
            <person name="Yokoyama S."/>
            <person name="Yasunaga T."/>
            <person name="Kuramitsu S."/>
        </authorList>
    </citation>
    <scope>NUCLEOTIDE SEQUENCE [LARGE SCALE GENOMIC DNA]</scope>
    <source>
        <strain>ATCC 27634 / DSM 579 / HB8</strain>
    </source>
</reference>
<evidence type="ECO:0000255" key="1">
    <source>
        <dbReference type="HAMAP-Rule" id="MF_00021"/>
    </source>
</evidence>
<sequence length="406" mass="44874">METLLLVQLFHELALKGKNRPFFLKRAKAHVRRALKGLGVALEGEWPMALLFRLPEEAWPEAKARLQDTLGVERFARVHRTPPDLEALKAALEKALEGQAFGSFRITAKRSDKAFPLTSPEIERALGAFVKGKTGAPVRLKGAEREFVVRVLPGAALLEVERHPGPGGLPPGVSGRVVALLSGGIDSPVAAYRLMRRGAEVVLVHFHPFPLLSGASREKAKALAERLARFQHRLRLHLVPFSEVQRHIIVEAPTAYRVVLYRRYMLRIAEAIAREEGALALCTGDSLGQVASQTLENLHAVNQAATLPVFRPLIGWDKEEIVAEAQRIGTYATSILPDEECCTLFAPKHPVTRARLEVVLETEARLPTEELLALALKEREVLTYTWPGKPLPEEPEGAFIMEHGPA</sequence>
<gene>
    <name evidence="1" type="primary">thiI</name>
    <name type="ordered locus">TTHA1796</name>
</gene>
<accession>Q5SHD4</accession>
<dbReference type="EC" id="2.8.1.4" evidence="1"/>
<dbReference type="EMBL" id="AP008226">
    <property type="protein sequence ID" value="BAD71619.1"/>
    <property type="molecule type" value="Genomic_DNA"/>
</dbReference>
<dbReference type="RefSeq" id="WP_011173822.1">
    <property type="nucleotide sequence ID" value="NC_006461.1"/>
</dbReference>
<dbReference type="RefSeq" id="YP_145062.1">
    <property type="nucleotide sequence ID" value="NC_006461.1"/>
</dbReference>
<dbReference type="SMR" id="Q5SHD4"/>
<dbReference type="EnsemblBacteria" id="BAD71619">
    <property type="protein sequence ID" value="BAD71619"/>
    <property type="gene ID" value="BAD71619"/>
</dbReference>
<dbReference type="GeneID" id="3168848"/>
<dbReference type="KEGG" id="ttj:TTHA1796"/>
<dbReference type="PATRIC" id="fig|300852.9.peg.1767"/>
<dbReference type="eggNOG" id="COG0301">
    <property type="taxonomic scope" value="Bacteria"/>
</dbReference>
<dbReference type="HOGENOM" id="CLU_037952_4_0_0"/>
<dbReference type="PhylomeDB" id="Q5SHD4"/>
<dbReference type="UniPathway" id="UPA00060"/>
<dbReference type="Proteomes" id="UP000000532">
    <property type="component" value="Chromosome"/>
</dbReference>
<dbReference type="GO" id="GO:0005829">
    <property type="term" value="C:cytosol"/>
    <property type="evidence" value="ECO:0007669"/>
    <property type="project" value="TreeGrafter"/>
</dbReference>
<dbReference type="GO" id="GO:0005524">
    <property type="term" value="F:ATP binding"/>
    <property type="evidence" value="ECO:0007669"/>
    <property type="project" value="UniProtKB-UniRule"/>
</dbReference>
<dbReference type="GO" id="GO:0004810">
    <property type="term" value="F:CCA tRNA nucleotidyltransferase activity"/>
    <property type="evidence" value="ECO:0007669"/>
    <property type="project" value="InterPro"/>
</dbReference>
<dbReference type="GO" id="GO:0000049">
    <property type="term" value="F:tRNA binding"/>
    <property type="evidence" value="ECO:0007669"/>
    <property type="project" value="UniProtKB-UniRule"/>
</dbReference>
<dbReference type="GO" id="GO:0140741">
    <property type="term" value="F:tRNA-uracil-4 sulfurtransferase activity"/>
    <property type="evidence" value="ECO:0007669"/>
    <property type="project" value="UniProtKB-EC"/>
</dbReference>
<dbReference type="GO" id="GO:0009228">
    <property type="term" value="P:thiamine biosynthetic process"/>
    <property type="evidence" value="ECO:0007669"/>
    <property type="project" value="UniProtKB-KW"/>
</dbReference>
<dbReference type="GO" id="GO:0009229">
    <property type="term" value="P:thiamine diphosphate biosynthetic process"/>
    <property type="evidence" value="ECO:0007669"/>
    <property type="project" value="UniProtKB-UniRule"/>
</dbReference>
<dbReference type="GO" id="GO:0052837">
    <property type="term" value="P:thiazole biosynthetic process"/>
    <property type="evidence" value="ECO:0007669"/>
    <property type="project" value="TreeGrafter"/>
</dbReference>
<dbReference type="GO" id="GO:0002937">
    <property type="term" value="P:tRNA 4-thiouridine biosynthesis"/>
    <property type="evidence" value="ECO:0007669"/>
    <property type="project" value="TreeGrafter"/>
</dbReference>
<dbReference type="CDD" id="cd01712">
    <property type="entry name" value="PPase_ThiI"/>
    <property type="match status" value="1"/>
</dbReference>
<dbReference type="CDD" id="cd11716">
    <property type="entry name" value="THUMP_ThiI"/>
    <property type="match status" value="1"/>
</dbReference>
<dbReference type="FunFam" id="3.40.50.620:FF:000053">
    <property type="entry name" value="Probable tRNA sulfurtransferase"/>
    <property type="match status" value="1"/>
</dbReference>
<dbReference type="Gene3D" id="3.30.2130.30">
    <property type="match status" value="1"/>
</dbReference>
<dbReference type="Gene3D" id="3.40.50.620">
    <property type="entry name" value="HUPs"/>
    <property type="match status" value="1"/>
</dbReference>
<dbReference type="HAMAP" id="MF_00021">
    <property type="entry name" value="ThiI"/>
    <property type="match status" value="1"/>
</dbReference>
<dbReference type="InterPro" id="IPR014729">
    <property type="entry name" value="Rossmann-like_a/b/a_fold"/>
</dbReference>
<dbReference type="InterPro" id="IPR020536">
    <property type="entry name" value="ThiI_AANH"/>
</dbReference>
<dbReference type="InterPro" id="IPR054173">
    <property type="entry name" value="ThiI_fer"/>
</dbReference>
<dbReference type="InterPro" id="IPR049961">
    <property type="entry name" value="ThiI_N"/>
</dbReference>
<dbReference type="InterPro" id="IPR004114">
    <property type="entry name" value="THUMP_dom"/>
</dbReference>
<dbReference type="InterPro" id="IPR049962">
    <property type="entry name" value="THUMP_ThiI"/>
</dbReference>
<dbReference type="InterPro" id="IPR003720">
    <property type="entry name" value="tRNA_STrfase"/>
</dbReference>
<dbReference type="InterPro" id="IPR050102">
    <property type="entry name" value="tRNA_sulfurtransferase_ThiI"/>
</dbReference>
<dbReference type="NCBIfam" id="TIGR00342">
    <property type="entry name" value="tRNA uracil 4-sulfurtransferase ThiI"/>
    <property type="match status" value="1"/>
</dbReference>
<dbReference type="PANTHER" id="PTHR43209">
    <property type="entry name" value="TRNA SULFURTRANSFERASE"/>
    <property type="match status" value="1"/>
</dbReference>
<dbReference type="PANTHER" id="PTHR43209:SF1">
    <property type="entry name" value="TRNA SULFURTRANSFERASE"/>
    <property type="match status" value="1"/>
</dbReference>
<dbReference type="Pfam" id="PF02568">
    <property type="entry name" value="ThiI"/>
    <property type="match status" value="1"/>
</dbReference>
<dbReference type="Pfam" id="PF22025">
    <property type="entry name" value="ThiI_fer"/>
    <property type="match status" value="1"/>
</dbReference>
<dbReference type="Pfam" id="PF02926">
    <property type="entry name" value="THUMP"/>
    <property type="match status" value="1"/>
</dbReference>
<dbReference type="SMART" id="SM00981">
    <property type="entry name" value="THUMP"/>
    <property type="match status" value="1"/>
</dbReference>
<dbReference type="SUPFAM" id="SSF52402">
    <property type="entry name" value="Adenine nucleotide alpha hydrolases-like"/>
    <property type="match status" value="1"/>
</dbReference>
<dbReference type="SUPFAM" id="SSF143437">
    <property type="entry name" value="THUMP domain-like"/>
    <property type="match status" value="1"/>
</dbReference>
<dbReference type="PROSITE" id="PS51165">
    <property type="entry name" value="THUMP"/>
    <property type="match status" value="1"/>
</dbReference>
<protein>
    <recommendedName>
        <fullName evidence="1">Probable tRNA sulfurtransferase</fullName>
        <ecNumber evidence="1">2.8.1.4</ecNumber>
    </recommendedName>
    <alternativeName>
        <fullName evidence="1">Sulfur carrier protein ThiS sulfurtransferase</fullName>
    </alternativeName>
    <alternativeName>
        <fullName evidence="1">Thiamine biosynthesis protein ThiI</fullName>
    </alternativeName>
    <alternativeName>
        <fullName evidence="1">tRNA 4-thiouridine synthase</fullName>
    </alternativeName>
</protein>
<name>THII_THET8</name>
<keyword id="KW-0067">ATP-binding</keyword>
<keyword id="KW-0963">Cytoplasm</keyword>
<keyword id="KW-0547">Nucleotide-binding</keyword>
<keyword id="KW-1185">Reference proteome</keyword>
<keyword id="KW-0694">RNA-binding</keyword>
<keyword id="KW-0784">Thiamine biosynthesis</keyword>
<keyword id="KW-0808">Transferase</keyword>
<keyword id="KW-0820">tRNA-binding</keyword>
<comment type="function">
    <text evidence="1">Catalyzes the ATP-dependent transfer of a sulfur to tRNA to produce 4-thiouridine in position 8 of tRNAs, which functions as a near-UV photosensor. Also catalyzes the transfer of sulfur to the sulfur carrier protein ThiS, forming ThiS-thiocarboxylate. This is a step in the synthesis of thiazole, in the thiamine biosynthesis pathway. The sulfur is donated as persulfide by IscS.</text>
</comment>
<comment type="catalytic activity">
    <reaction evidence="1">
        <text>[ThiI sulfur-carrier protein]-S-sulfanyl-L-cysteine + a uridine in tRNA + 2 reduced [2Fe-2S]-[ferredoxin] + ATP + H(+) = [ThiI sulfur-carrier protein]-L-cysteine + a 4-thiouridine in tRNA + 2 oxidized [2Fe-2S]-[ferredoxin] + AMP + diphosphate</text>
        <dbReference type="Rhea" id="RHEA:24176"/>
        <dbReference type="Rhea" id="RHEA-COMP:10000"/>
        <dbReference type="Rhea" id="RHEA-COMP:10001"/>
        <dbReference type="Rhea" id="RHEA-COMP:13337"/>
        <dbReference type="Rhea" id="RHEA-COMP:13338"/>
        <dbReference type="Rhea" id="RHEA-COMP:13339"/>
        <dbReference type="Rhea" id="RHEA-COMP:13340"/>
        <dbReference type="ChEBI" id="CHEBI:15378"/>
        <dbReference type="ChEBI" id="CHEBI:29950"/>
        <dbReference type="ChEBI" id="CHEBI:30616"/>
        <dbReference type="ChEBI" id="CHEBI:33019"/>
        <dbReference type="ChEBI" id="CHEBI:33737"/>
        <dbReference type="ChEBI" id="CHEBI:33738"/>
        <dbReference type="ChEBI" id="CHEBI:61963"/>
        <dbReference type="ChEBI" id="CHEBI:65315"/>
        <dbReference type="ChEBI" id="CHEBI:136798"/>
        <dbReference type="ChEBI" id="CHEBI:456215"/>
        <dbReference type="EC" id="2.8.1.4"/>
    </reaction>
</comment>
<comment type="catalytic activity">
    <reaction evidence="1">
        <text>[ThiS sulfur-carrier protein]-C-terminal Gly-Gly-AMP + S-sulfanyl-L-cysteinyl-[cysteine desulfurase] + AH2 = [ThiS sulfur-carrier protein]-C-terminal-Gly-aminoethanethioate + L-cysteinyl-[cysteine desulfurase] + A + AMP + 2 H(+)</text>
        <dbReference type="Rhea" id="RHEA:43340"/>
        <dbReference type="Rhea" id="RHEA-COMP:12157"/>
        <dbReference type="Rhea" id="RHEA-COMP:12158"/>
        <dbReference type="Rhea" id="RHEA-COMP:12910"/>
        <dbReference type="Rhea" id="RHEA-COMP:19908"/>
        <dbReference type="ChEBI" id="CHEBI:13193"/>
        <dbReference type="ChEBI" id="CHEBI:15378"/>
        <dbReference type="ChEBI" id="CHEBI:17499"/>
        <dbReference type="ChEBI" id="CHEBI:29950"/>
        <dbReference type="ChEBI" id="CHEBI:61963"/>
        <dbReference type="ChEBI" id="CHEBI:90618"/>
        <dbReference type="ChEBI" id="CHEBI:232372"/>
        <dbReference type="ChEBI" id="CHEBI:456215"/>
    </reaction>
</comment>
<comment type="pathway">
    <text evidence="1">Cofactor biosynthesis; thiamine diphosphate biosynthesis.</text>
</comment>
<comment type="subcellular location">
    <subcellularLocation>
        <location evidence="1">Cytoplasm</location>
    </subcellularLocation>
</comment>
<comment type="similarity">
    <text evidence="1">Belongs to the ThiI family.</text>
</comment>
<feature type="chain" id="PRO_1000074305" description="Probable tRNA sulfurtransferase">
    <location>
        <begin position="1"/>
        <end position="406"/>
    </location>
</feature>
<feature type="domain" description="THUMP" evidence="1">
    <location>
        <begin position="60"/>
        <end position="162"/>
    </location>
</feature>
<feature type="binding site" evidence="1">
    <location>
        <begin position="180"/>
        <end position="181"/>
    </location>
    <ligand>
        <name>ATP</name>
        <dbReference type="ChEBI" id="CHEBI:30616"/>
    </ligand>
</feature>
<feature type="binding site" evidence="1">
    <location>
        <begin position="205"/>
        <end position="206"/>
    </location>
    <ligand>
        <name>ATP</name>
        <dbReference type="ChEBI" id="CHEBI:30616"/>
    </ligand>
</feature>
<feature type="binding site" evidence="1">
    <location>
        <position position="262"/>
    </location>
    <ligand>
        <name>ATP</name>
        <dbReference type="ChEBI" id="CHEBI:30616"/>
    </ligand>
</feature>
<feature type="binding site" evidence="1">
    <location>
        <position position="284"/>
    </location>
    <ligand>
        <name>ATP</name>
        <dbReference type="ChEBI" id="CHEBI:30616"/>
    </ligand>
</feature>
<feature type="binding site" evidence="1">
    <location>
        <position position="293"/>
    </location>
    <ligand>
        <name>ATP</name>
        <dbReference type="ChEBI" id="CHEBI:30616"/>
    </ligand>
</feature>